<dbReference type="EMBL" id="U00090">
    <property type="protein sequence ID" value="AAB91744.1"/>
    <property type="molecule type" value="Genomic_DNA"/>
</dbReference>
<dbReference type="PIR" id="T10867">
    <property type="entry name" value="T10867"/>
</dbReference>
<dbReference type="RefSeq" id="NP_443942.1">
    <property type="nucleotide sequence ID" value="NC_000914.2"/>
</dbReference>
<dbReference type="KEGG" id="rhi:NGR_a02830"/>
<dbReference type="PATRIC" id="fig|394.7.peg.300"/>
<dbReference type="HOGENOM" id="CLU_2082983_0_0_5"/>
<dbReference type="OrthoDB" id="1426235at2"/>
<dbReference type="Proteomes" id="UP000001054">
    <property type="component" value="Plasmid pNGR234a"/>
</dbReference>
<name>Y4KM_SINFN</name>
<reference key="1">
    <citation type="journal article" date="1997" name="Nature">
        <title>Molecular basis of symbiosis between Rhizobium and legumes.</title>
        <authorList>
            <person name="Freiberg C.A."/>
            <person name="Fellay R."/>
            <person name="Bairoch A."/>
            <person name="Broughton W.J."/>
            <person name="Rosenthal A."/>
            <person name="Perret X."/>
        </authorList>
    </citation>
    <scope>NUCLEOTIDE SEQUENCE [LARGE SCALE GENOMIC DNA]</scope>
    <source>
        <strain>NBRC 101917 / NGR234</strain>
    </source>
</reference>
<reference key="2">
    <citation type="journal article" date="2009" name="Appl. Environ. Microbiol.">
        <title>Rhizobium sp. strain NGR234 possesses a remarkable number of secretion systems.</title>
        <authorList>
            <person name="Schmeisser C."/>
            <person name="Liesegang H."/>
            <person name="Krysciak D."/>
            <person name="Bakkou N."/>
            <person name="Le Quere A."/>
            <person name="Wollherr A."/>
            <person name="Heinemeyer I."/>
            <person name="Morgenstern B."/>
            <person name="Pommerening-Roeser A."/>
            <person name="Flores M."/>
            <person name="Palacios R."/>
            <person name="Brenner S."/>
            <person name="Gottschalk G."/>
            <person name="Schmitz R.A."/>
            <person name="Broughton W.J."/>
            <person name="Perret X."/>
            <person name="Strittmatter A.W."/>
            <person name="Streit W.R."/>
        </authorList>
    </citation>
    <scope>NUCLEOTIDE SEQUENCE [LARGE SCALE GENOMIC DNA]</scope>
    <source>
        <strain>NBRC 101917 / NGR234</strain>
    </source>
</reference>
<accession>P55531</accession>
<feature type="chain" id="PRO_0000200892" description="Uncharacterized protein y4kM">
    <location>
        <begin position="1"/>
        <end position="117"/>
    </location>
</feature>
<geneLocation type="plasmid">
    <name>sym pNGR234a</name>
</geneLocation>
<gene>
    <name type="ordered locus">NGR_a02830</name>
    <name type="ORF">y4kM</name>
</gene>
<keyword id="KW-0614">Plasmid</keyword>
<keyword id="KW-1185">Reference proteome</keyword>
<protein>
    <recommendedName>
        <fullName>Uncharacterized protein y4kM</fullName>
    </recommendedName>
</protein>
<sequence length="117" mass="13117">MPSSGSGKAIGQLFESMSDNSFTCTVVNRGYKGGRDAHITVHNSKGSRHHFGDINYSWQSHSESNTSNGHVKVDADEYNMFLSLNDFMSSEKKRYDAKQVADVLWLEFTNQAGIEYD</sequence>
<proteinExistence type="predicted"/>
<organism>
    <name type="scientific">Sinorhizobium fredii (strain NBRC 101917 / NGR234)</name>
    <dbReference type="NCBI Taxonomy" id="394"/>
    <lineage>
        <taxon>Bacteria</taxon>
        <taxon>Pseudomonadati</taxon>
        <taxon>Pseudomonadota</taxon>
        <taxon>Alphaproteobacteria</taxon>
        <taxon>Hyphomicrobiales</taxon>
        <taxon>Rhizobiaceae</taxon>
        <taxon>Sinorhizobium/Ensifer group</taxon>
        <taxon>Sinorhizobium</taxon>
    </lineage>
</organism>